<dbReference type="EMBL" id="AAHF01000012">
    <property type="protein sequence ID" value="EAL85657.1"/>
    <property type="molecule type" value="Genomic_DNA"/>
</dbReference>
<dbReference type="RefSeq" id="XP_747695.1">
    <property type="nucleotide sequence ID" value="XM_742602.1"/>
</dbReference>
<dbReference type="SMR" id="Q4WD81"/>
<dbReference type="FunCoup" id="Q4WD81">
    <property type="interactions" value="555"/>
</dbReference>
<dbReference type="STRING" id="330879.Q4WD81"/>
<dbReference type="EnsemblFungi" id="EAL85657">
    <property type="protein sequence ID" value="EAL85657"/>
    <property type="gene ID" value="AFUA_6G03820"/>
</dbReference>
<dbReference type="GeneID" id="3505085"/>
<dbReference type="KEGG" id="afm:AFUA_6G03820"/>
<dbReference type="VEuPathDB" id="FungiDB:Afu6g03820"/>
<dbReference type="eggNOG" id="KOG2239">
    <property type="taxonomic scope" value="Eukaryota"/>
</dbReference>
<dbReference type="HOGENOM" id="CLU_057806_2_0_1"/>
<dbReference type="InParanoid" id="Q4WD81"/>
<dbReference type="OMA" id="SQKMIFA"/>
<dbReference type="OrthoDB" id="3169036at2759"/>
<dbReference type="Proteomes" id="UP000002530">
    <property type="component" value="Chromosome 6"/>
</dbReference>
<dbReference type="GO" id="GO:0005737">
    <property type="term" value="C:cytoplasm"/>
    <property type="evidence" value="ECO:0000318"/>
    <property type="project" value="GO_Central"/>
</dbReference>
<dbReference type="GO" id="GO:0005854">
    <property type="term" value="C:nascent polypeptide-associated complex"/>
    <property type="evidence" value="ECO:0007669"/>
    <property type="project" value="EnsemblFungi"/>
</dbReference>
<dbReference type="GO" id="GO:0005634">
    <property type="term" value="C:nucleus"/>
    <property type="evidence" value="ECO:0007669"/>
    <property type="project" value="UniProtKB-SubCell"/>
</dbReference>
<dbReference type="GO" id="GO:0051082">
    <property type="term" value="F:unfolded protein binding"/>
    <property type="evidence" value="ECO:0000318"/>
    <property type="project" value="GO_Central"/>
</dbReference>
<dbReference type="GO" id="GO:0006612">
    <property type="term" value="P:protein targeting to membrane"/>
    <property type="evidence" value="ECO:0000318"/>
    <property type="project" value="GO_Central"/>
</dbReference>
<dbReference type="GO" id="GO:0015031">
    <property type="term" value="P:protein transport"/>
    <property type="evidence" value="ECO:0007669"/>
    <property type="project" value="UniProtKB-KW"/>
</dbReference>
<dbReference type="CDD" id="cd22054">
    <property type="entry name" value="NAC_NACA"/>
    <property type="match status" value="1"/>
</dbReference>
<dbReference type="CDD" id="cd14358">
    <property type="entry name" value="UBA_NAC_euk"/>
    <property type="match status" value="1"/>
</dbReference>
<dbReference type="FunFam" id="2.20.70.30:FF:000002">
    <property type="entry name" value="Nascent polypeptide-associated complex (NAC), alpha subunit"/>
    <property type="match status" value="1"/>
</dbReference>
<dbReference type="FunFam" id="1.10.8.10:FF:000006">
    <property type="entry name" value="Putative nascent polypeptide-associated complex subunit alpha"/>
    <property type="match status" value="1"/>
</dbReference>
<dbReference type="Gene3D" id="1.10.8.10">
    <property type="entry name" value="DNA helicase RuvA subunit, C-terminal domain"/>
    <property type="match status" value="1"/>
</dbReference>
<dbReference type="Gene3D" id="2.20.70.30">
    <property type="entry name" value="Nascent polypeptide-associated complex domain"/>
    <property type="match status" value="1"/>
</dbReference>
<dbReference type="InterPro" id="IPR016641">
    <property type="entry name" value="EGD2/NACA0like"/>
</dbReference>
<dbReference type="InterPro" id="IPR044034">
    <property type="entry name" value="NAC-like_UBA"/>
</dbReference>
<dbReference type="InterPro" id="IPR038187">
    <property type="entry name" value="NAC_A/B_dom_sf"/>
</dbReference>
<dbReference type="InterPro" id="IPR002715">
    <property type="entry name" value="Nas_poly-pep-assoc_cplx_dom"/>
</dbReference>
<dbReference type="PANTHER" id="PTHR21713">
    <property type="entry name" value="NASCENT POLYPEPTIDE ASSOCIATED COMPLEX ALPHA SUBUNIT-RELATED"/>
    <property type="match status" value="1"/>
</dbReference>
<dbReference type="Pfam" id="PF01849">
    <property type="entry name" value="NAC"/>
    <property type="match status" value="1"/>
</dbReference>
<dbReference type="Pfam" id="PF19026">
    <property type="entry name" value="UBA_HYPK"/>
    <property type="match status" value="1"/>
</dbReference>
<dbReference type="PIRSF" id="PIRSF015901">
    <property type="entry name" value="NAC_alpha"/>
    <property type="match status" value="1"/>
</dbReference>
<dbReference type="SMART" id="SM01407">
    <property type="entry name" value="NAC"/>
    <property type="match status" value="1"/>
</dbReference>
<dbReference type="PROSITE" id="PS51151">
    <property type="entry name" value="NAC_AB"/>
    <property type="match status" value="1"/>
</dbReference>
<name>NACA_ASPFU</name>
<gene>
    <name type="primary">egd2</name>
    <name type="ORF">AFUA_6G03820</name>
</gene>
<proteinExistence type="inferred from homology"/>
<protein>
    <recommendedName>
        <fullName>Nascent polypeptide-associated complex subunit alpha</fullName>
        <shortName>NAC-alpha</shortName>
    </recommendedName>
    <alternativeName>
        <fullName>Alpha-NAC</fullName>
    </alternativeName>
</protein>
<evidence type="ECO:0000250" key="1"/>
<evidence type="ECO:0000255" key="2">
    <source>
        <dbReference type="PROSITE-ProRule" id="PRU00507"/>
    </source>
</evidence>
<evidence type="ECO:0000256" key="3">
    <source>
        <dbReference type="SAM" id="MobiDB-lite"/>
    </source>
</evidence>
<evidence type="ECO:0000305" key="4"/>
<accession>Q4WD81</accession>
<feature type="chain" id="PRO_0000273480" description="Nascent polypeptide-associated complex subunit alpha">
    <location>
        <begin position="1"/>
        <end position="204"/>
    </location>
</feature>
<feature type="domain" description="NAC-A/B" evidence="2">
    <location>
        <begin position="46"/>
        <end position="111"/>
    </location>
</feature>
<feature type="domain" description="UBA">
    <location>
        <begin position="165"/>
        <end position="204"/>
    </location>
</feature>
<feature type="region of interest" description="Disordered" evidence="3">
    <location>
        <begin position="1"/>
        <end position="47"/>
    </location>
</feature>
<feature type="region of interest" description="Disordered" evidence="3">
    <location>
        <begin position="118"/>
        <end position="167"/>
    </location>
</feature>
<feature type="compositionally biased region" description="Basic and acidic residues" evidence="3">
    <location>
        <begin position="1"/>
        <end position="19"/>
    </location>
</feature>
<feature type="compositionally biased region" description="Acidic residues" evidence="3">
    <location>
        <begin position="22"/>
        <end position="32"/>
    </location>
</feature>
<feature type="compositionally biased region" description="Low complexity" evidence="3">
    <location>
        <begin position="118"/>
        <end position="128"/>
    </location>
</feature>
<feature type="compositionally biased region" description="Basic and acidic residues" evidence="3">
    <location>
        <begin position="129"/>
        <end position="151"/>
    </location>
</feature>
<feature type="compositionally biased region" description="Acidic residues" evidence="3">
    <location>
        <begin position="152"/>
        <end position="164"/>
    </location>
</feature>
<sequence>MADPRVEELPDEEVPKANVEDAGSDSESEAGEESSIPAGAAVTIHSRNEKKARKAIGKLGLKHVPGITRVTLRRPKNILFVINQPDVYRSPSSNTWIIFGEAKIEDLNSQAQASAAQQLAAAEAAAGEHAGHDHDHDHGKGKAPETEAKKEEEEDDGEEVDETGLEAKDIELVMAQANVSRKKAVKALRENDNDIVNSIMALSI</sequence>
<reference key="1">
    <citation type="journal article" date="2005" name="Nature">
        <title>Genomic sequence of the pathogenic and allergenic filamentous fungus Aspergillus fumigatus.</title>
        <authorList>
            <person name="Nierman W.C."/>
            <person name="Pain A."/>
            <person name="Anderson M.J."/>
            <person name="Wortman J.R."/>
            <person name="Kim H.S."/>
            <person name="Arroyo J."/>
            <person name="Berriman M."/>
            <person name="Abe K."/>
            <person name="Archer D.B."/>
            <person name="Bermejo C."/>
            <person name="Bennett J.W."/>
            <person name="Bowyer P."/>
            <person name="Chen D."/>
            <person name="Collins M."/>
            <person name="Coulsen R."/>
            <person name="Davies R."/>
            <person name="Dyer P.S."/>
            <person name="Farman M.L."/>
            <person name="Fedorova N."/>
            <person name="Fedorova N.D."/>
            <person name="Feldblyum T.V."/>
            <person name="Fischer R."/>
            <person name="Fosker N."/>
            <person name="Fraser A."/>
            <person name="Garcia J.L."/>
            <person name="Garcia M.J."/>
            <person name="Goble A."/>
            <person name="Goldman G.H."/>
            <person name="Gomi K."/>
            <person name="Griffith-Jones S."/>
            <person name="Gwilliam R."/>
            <person name="Haas B.J."/>
            <person name="Haas H."/>
            <person name="Harris D.E."/>
            <person name="Horiuchi H."/>
            <person name="Huang J."/>
            <person name="Humphray S."/>
            <person name="Jimenez J."/>
            <person name="Keller N."/>
            <person name="Khouri H."/>
            <person name="Kitamoto K."/>
            <person name="Kobayashi T."/>
            <person name="Konzack S."/>
            <person name="Kulkarni R."/>
            <person name="Kumagai T."/>
            <person name="Lafton A."/>
            <person name="Latge J.-P."/>
            <person name="Li W."/>
            <person name="Lord A."/>
            <person name="Lu C."/>
            <person name="Majoros W.H."/>
            <person name="May G.S."/>
            <person name="Miller B.L."/>
            <person name="Mohamoud Y."/>
            <person name="Molina M."/>
            <person name="Monod M."/>
            <person name="Mouyna I."/>
            <person name="Mulligan S."/>
            <person name="Murphy L.D."/>
            <person name="O'Neil S."/>
            <person name="Paulsen I."/>
            <person name="Penalva M.A."/>
            <person name="Pertea M."/>
            <person name="Price C."/>
            <person name="Pritchard B.L."/>
            <person name="Quail M.A."/>
            <person name="Rabbinowitsch E."/>
            <person name="Rawlins N."/>
            <person name="Rajandream M.A."/>
            <person name="Reichard U."/>
            <person name="Renauld H."/>
            <person name="Robson G.D."/>
            <person name="Rodriguez de Cordoba S."/>
            <person name="Rodriguez-Pena J.M."/>
            <person name="Ronning C.M."/>
            <person name="Rutter S."/>
            <person name="Salzberg S.L."/>
            <person name="Sanchez M."/>
            <person name="Sanchez-Ferrero J.C."/>
            <person name="Saunders D."/>
            <person name="Seeger K."/>
            <person name="Squares R."/>
            <person name="Squares S."/>
            <person name="Takeuchi M."/>
            <person name="Tekaia F."/>
            <person name="Turner G."/>
            <person name="Vazquez de Aldana C.R."/>
            <person name="Weidman J."/>
            <person name="White O."/>
            <person name="Woodward J.R."/>
            <person name="Yu J.-H."/>
            <person name="Fraser C.M."/>
            <person name="Galagan J.E."/>
            <person name="Asai K."/>
            <person name="Machida M."/>
            <person name="Hall N."/>
            <person name="Barrell B.G."/>
            <person name="Denning D.W."/>
        </authorList>
    </citation>
    <scope>NUCLEOTIDE SEQUENCE [LARGE SCALE GENOMIC DNA]</scope>
    <source>
        <strain>ATCC MYA-4609 / CBS 101355 / FGSC A1100 / Af293</strain>
    </source>
</reference>
<keyword id="KW-0963">Cytoplasm</keyword>
<keyword id="KW-0539">Nucleus</keyword>
<keyword id="KW-0653">Protein transport</keyword>
<keyword id="KW-1185">Reference proteome</keyword>
<keyword id="KW-0813">Transport</keyword>
<comment type="function">
    <text evidence="1">Component of the nascent polypeptide-associated complex (NAC), a dynamic component of the ribosomal exit tunnel, protecting the emerging polypeptides from interaction with other cytoplasmic proteins to ensure appropriate nascent protein targeting. The NAC complex also promotes mitochondrial protein import by enhancing productive ribosome interactions with the outer mitochondrial membrane and blocks the inappropriate interaction of ribosomes translating non-secretory nascent polypeptides with translocation sites in the membrane of the endoplasmic reticulum. Egd2 may also be involved in transcription regulation (By similarity).</text>
</comment>
<comment type="subunit">
    <text evidence="1">Part of the nascent polypeptide-associated complex (NAC), consisting of egd2 and egd1. NAC associates with ribosomes via egd1 (By similarity).</text>
</comment>
<comment type="subcellular location">
    <subcellularLocation>
        <location evidence="1">Cytoplasm</location>
    </subcellularLocation>
    <subcellularLocation>
        <location evidence="1">Nucleus</location>
    </subcellularLocation>
    <text evidence="1">Predominantly cytoplasmic, may also transiently localize to the nucleus.</text>
</comment>
<comment type="similarity">
    <text evidence="4">Belongs to the NAC-alpha family.</text>
</comment>
<organism>
    <name type="scientific">Aspergillus fumigatus (strain ATCC MYA-4609 / CBS 101355 / FGSC A1100 / Af293)</name>
    <name type="common">Neosartorya fumigata</name>
    <dbReference type="NCBI Taxonomy" id="330879"/>
    <lineage>
        <taxon>Eukaryota</taxon>
        <taxon>Fungi</taxon>
        <taxon>Dikarya</taxon>
        <taxon>Ascomycota</taxon>
        <taxon>Pezizomycotina</taxon>
        <taxon>Eurotiomycetes</taxon>
        <taxon>Eurotiomycetidae</taxon>
        <taxon>Eurotiales</taxon>
        <taxon>Aspergillaceae</taxon>
        <taxon>Aspergillus</taxon>
        <taxon>Aspergillus subgen. Fumigati</taxon>
    </lineage>
</organism>